<gene>
    <name evidence="3" type="primary">Segment-2</name>
</gene>
<organism>
    <name type="scientific">Infectious salmon anemia virus (isolate Atlantic salmon/Norway/810/9/99)</name>
    <name type="common">ISAV</name>
    <dbReference type="NCBI Taxonomy" id="652965"/>
    <lineage>
        <taxon>Viruses</taxon>
        <taxon>Riboviria</taxon>
        <taxon>Orthornavirae</taxon>
        <taxon>Negarnaviricota</taxon>
        <taxon>Polyploviricotina</taxon>
        <taxon>Insthoviricetes</taxon>
        <taxon>Articulavirales</taxon>
        <taxon>Orthomyxoviridae</taxon>
        <taxon>Isavirus</taxon>
        <taxon>Isavirus salaris</taxon>
    </lineage>
</organism>
<accession>Q8V3T6</accession>
<organismHost>
    <name type="scientific">Gadus morhua</name>
    <name type="common">Atlantic cod</name>
    <dbReference type="NCBI Taxonomy" id="8049"/>
</organismHost>
<organismHost>
    <name type="scientific">Oncorhynchus kisutch</name>
    <name type="common">Coho salmon</name>
    <name type="synonym">Salmo kisutch</name>
    <dbReference type="NCBI Taxonomy" id="8019"/>
</organismHost>
<organismHost>
    <name type="scientific">Oncorhynchus mykiss</name>
    <name type="common">Rainbow trout</name>
    <name type="synonym">Salmo gairdneri</name>
    <dbReference type="NCBI Taxonomy" id="8022"/>
</organismHost>
<organismHost>
    <name type="scientific">Pollachius virens</name>
    <name type="common">Saithe</name>
    <name type="synonym">Gadus virens</name>
    <dbReference type="NCBI Taxonomy" id="8060"/>
</organismHost>
<organismHost>
    <name type="scientific">Salmo salar</name>
    <name type="common">Atlantic salmon</name>
    <dbReference type="NCBI Taxonomy" id="8030"/>
</organismHost>
<organismHost>
    <name type="scientific">Salmo trutta</name>
    <name type="common">Brown trout</name>
    <dbReference type="NCBI Taxonomy" id="8032"/>
</organismHost>
<feature type="chain" id="PRO_0000403918" description="RNA-directed RNA polymerase catalytic subunit">
    <location>
        <begin position="1"/>
        <end position="708"/>
    </location>
</feature>
<feature type="domain" description="RdRp catalytic" evidence="2">
    <location>
        <begin position="281"/>
        <end position="467"/>
    </location>
</feature>
<reference key="1">
    <citation type="journal article" date="2002" name="J. Gen. Virol.">
        <title>Genomic organization of infectious salmon anaemia virus.</title>
        <authorList>
            <person name="Clouthier S.C."/>
            <person name="Rector T."/>
            <person name="Brown N.E."/>
            <person name="Anderson E.D."/>
        </authorList>
    </citation>
    <scope>NUCLEOTIDE SEQUENCE [GENOMIC RNA]</scope>
</reference>
<reference key="2">
    <citation type="submission" date="2006-06" db="EMBL/GenBank/DDBJ databases">
        <title>Infectious salmon anaemia virus genomic RNA segment 2.</title>
        <authorList>
            <person name="Kibenge F.S."/>
            <person name="Kibenge M.J."/>
            <person name="Qian B."/>
        </authorList>
    </citation>
    <scope>NUCLEOTIDE SEQUENCE [GENOMIC RNA]</scope>
    <source>
        <strain>RPC/NB 02-0775-14</strain>
    </source>
</reference>
<reference key="3">
    <citation type="journal article" date="2011" name="Virus Res.">
        <title>Infectious salmon anemia virus--genetics and pathogenesis.</title>
        <authorList>
            <person name="Cottet L."/>
            <person name="Rivas-Aravena A."/>
            <person name="Cortez-San Martin M."/>
            <person name="Sandino A.M."/>
            <person name="Spencer E."/>
        </authorList>
    </citation>
    <scope>REVIEW</scope>
</reference>
<comment type="function">
    <text evidence="1">RNA-dependent RNA polymerase which is responsible for replication and transcription of virus segments. Binds the promoter sequence of the encapsidated viral RNA. Displays an endonuclease activity involved in cap-stealing. Cleaves cellular pre-mRNA to generate primers for viral transcription (By similarity).</text>
</comment>
<comment type="catalytic activity">
    <reaction evidence="2">
        <text>RNA(n) + a ribonucleoside 5'-triphosphate = RNA(n+1) + diphosphate</text>
        <dbReference type="Rhea" id="RHEA:21248"/>
        <dbReference type="Rhea" id="RHEA-COMP:14527"/>
        <dbReference type="Rhea" id="RHEA-COMP:17342"/>
        <dbReference type="ChEBI" id="CHEBI:33019"/>
        <dbReference type="ChEBI" id="CHEBI:61557"/>
        <dbReference type="ChEBI" id="CHEBI:140395"/>
        <dbReference type="EC" id="2.7.7.48"/>
    </reaction>
</comment>
<comment type="subunit">
    <text evidence="1">The RNA polymerase is composed of three subunits: PB1, PB2 and PA.</text>
</comment>
<proteinExistence type="inferred from homology"/>
<protein>
    <recommendedName>
        <fullName>RNA-directed RNA polymerase catalytic subunit</fullName>
        <ecNumber>2.7.7.48</ecNumber>
    </recommendedName>
    <alternativeName>
        <fullName>Polymerase basic protein 1</fullName>
        <shortName>PB1</shortName>
    </alternativeName>
    <alternativeName>
        <fullName>Protein 1</fullName>
        <shortName>P1</shortName>
    </alternativeName>
    <alternativeName>
        <fullName>RNA-directed RNA polymerase subunit P1</fullName>
    </alternativeName>
</protein>
<evidence type="ECO:0000250" key="1"/>
<evidence type="ECO:0000255" key="2">
    <source>
        <dbReference type="PROSITE-ProRule" id="PRU00539"/>
    </source>
</evidence>
<evidence type="ECO:0000303" key="3">
    <source>
    </source>
</evidence>
<dbReference type="EC" id="2.7.7.48"/>
<dbReference type="EMBL" id="AF404346">
    <property type="protein sequence ID" value="AAL67962.1"/>
    <property type="molecule type" value="Viral_cRNA"/>
</dbReference>
<dbReference type="EMBL" id="DQ676937">
    <property type="protein sequence ID" value="ABG81414.1"/>
    <property type="molecule type" value="Viral_cRNA"/>
</dbReference>
<dbReference type="SMR" id="Q8V3T6"/>
<dbReference type="KEGG" id="vg:71004596"/>
<dbReference type="Proteomes" id="UP000008772">
    <property type="component" value="Genome"/>
</dbReference>
<dbReference type="GO" id="GO:0000166">
    <property type="term" value="F:nucleotide binding"/>
    <property type="evidence" value="ECO:0007669"/>
    <property type="project" value="UniProtKB-KW"/>
</dbReference>
<dbReference type="GO" id="GO:0003723">
    <property type="term" value="F:RNA binding"/>
    <property type="evidence" value="ECO:0007669"/>
    <property type="project" value="InterPro"/>
</dbReference>
<dbReference type="GO" id="GO:0003968">
    <property type="term" value="F:RNA-directed RNA polymerase activity"/>
    <property type="evidence" value="ECO:0007669"/>
    <property type="project" value="UniProtKB-KW"/>
</dbReference>
<dbReference type="GO" id="GO:0039694">
    <property type="term" value="P:viral RNA genome replication"/>
    <property type="evidence" value="ECO:0007669"/>
    <property type="project" value="InterPro"/>
</dbReference>
<dbReference type="InterPro" id="IPR007099">
    <property type="entry name" value="RNA-dir_pol_NSvirus"/>
</dbReference>
<dbReference type="InterPro" id="IPR001407">
    <property type="entry name" value="RNA_pol_PB1_influenza"/>
</dbReference>
<dbReference type="Pfam" id="PF00602">
    <property type="entry name" value="Flu_PB1"/>
    <property type="match status" value="1"/>
</dbReference>
<dbReference type="PIRSF" id="PIRSF000827">
    <property type="entry name" value="RdRPol_OMV"/>
    <property type="match status" value="1"/>
</dbReference>
<dbReference type="PROSITE" id="PS50525">
    <property type="entry name" value="RDRP_SSRNA_NEG_SEG"/>
    <property type="match status" value="1"/>
</dbReference>
<name>RDRP_ISAV8</name>
<keyword id="KW-0547">Nucleotide-binding</keyword>
<keyword id="KW-0548">Nucleotidyltransferase</keyword>
<keyword id="KW-1185">Reference proteome</keyword>
<keyword id="KW-0696">RNA-directed RNA polymerase</keyword>
<keyword id="KW-0808">Transferase</keyword>
<keyword id="KW-0693">Viral RNA replication</keyword>
<sequence length="708" mass="80526">METLVGGLLTGEDSLISMSNDVSCLYVYDGPMRVFSQNALMPTLQSVKRSDQFSKGKTKRFIIDLFGMKRMWDIGNKQLEDENLDETVGVADLGLVKYLINNKYDEAEKTSLRKSMEEAFEKSMNEEFVVLNKGKSANDIISDTNAMCKFCVKNWIVATGFRGRTMSDLIEHHFRCMQGKQEVKGYIWKHKYNERLKRKQLSKEEVKFDREEYTSRSFRLLSFLKNSERTKLEPRAVFTAGVPWRAFIFVLEQTMLVVNKLDPNSVIWMGSDAKINTTNSRIKEIGMKNQGQTLVTLTGDNSKYNESMCPEVMMVFLRELGIKGPMLEVLDYALWQFSQKSVKPVAPIKKRTGKSTVVIKADSVKECRDAFNEKELELIQGVEWMDDGFVRVRRGMLMGMANNAFTTASTIASSFSFTPEAVYTLQSSDDFVTGSCGRDVQHARQRLEMALKVSKAAGLNVSQKKSFYVEGTTFEFNSMFVRDGKVMANGGNFENMTVPGGLGPSTDLFVVGKQARNSMLRGNLSFSQAMEMCKIGITNVEKVYYGNRKYQELKNEIREKCGEETMSIPESMGGDRKPRPWELPQSFDGIALKEAVNRGHWKAAKYIKSCCSIEFDEEGDQSWDTSKTALVVIRKNETDMRRRTVKTRNPKDKIFNDAMNKAKRMYETVVDRNPLLGLKGKGGRLTVKDLKARKLIDEVEVVKKKKHV</sequence>